<proteinExistence type="inferred from homology"/>
<evidence type="ECO:0000255" key="1">
    <source>
        <dbReference type="HAMAP-Rule" id="MF_01631"/>
    </source>
</evidence>
<comment type="function">
    <text evidence="1">Catalyzes the last two sequential reactions in the de novo biosynthetic pathway for UDP-N-acetylglucosamine (UDP-GlcNAc). The C-terminal domain catalyzes the transfer of acetyl group from acetyl coenzyme A to glucosamine-1-phosphate (GlcN-1-P) to produce N-acetylglucosamine-1-phosphate (GlcNAc-1-P), which is converted into UDP-GlcNAc by the transfer of uridine 5-monophosphate (from uridine 5-triphosphate), a reaction catalyzed by the N-terminal domain.</text>
</comment>
<comment type="catalytic activity">
    <reaction evidence="1">
        <text>alpha-D-glucosamine 1-phosphate + acetyl-CoA = N-acetyl-alpha-D-glucosamine 1-phosphate + CoA + H(+)</text>
        <dbReference type="Rhea" id="RHEA:13725"/>
        <dbReference type="ChEBI" id="CHEBI:15378"/>
        <dbReference type="ChEBI" id="CHEBI:57287"/>
        <dbReference type="ChEBI" id="CHEBI:57288"/>
        <dbReference type="ChEBI" id="CHEBI:57776"/>
        <dbReference type="ChEBI" id="CHEBI:58516"/>
        <dbReference type="EC" id="2.3.1.157"/>
    </reaction>
</comment>
<comment type="catalytic activity">
    <reaction evidence="1">
        <text>N-acetyl-alpha-D-glucosamine 1-phosphate + UTP + H(+) = UDP-N-acetyl-alpha-D-glucosamine + diphosphate</text>
        <dbReference type="Rhea" id="RHEA:13509"/>
        <dbReference type="ChEBI" id="CHEBI:15378"/>
        <dbReference type="ChEBI" id="CHEBI:33019"/>
        <dbReference type="ChEBI" id="CHEBI:46398"/>
        <dbReference type="ChEBI" id="CHEBI:57705"/>
        <dbReference type="ChEBI" id="CHEBI:57776"/>
        <dbReference type="EC" id="2.7.7.23"/>
    </reaction>
</comment>
<comment type="cofactor">
    <cofactor evidence="1">
        <name>Mg(2+)</name>
        <dbReference type="ChEBI" id="CHEBI:18420"/>
    </cofactor>
    <text evidence="1">Binds 1 Mg(2+) ion per subunit.</text>
</comment>
<comment type="pathway">
    <text evidence="1">Nucleotide-sugar biosynthesis; UDP-N-acetyl-alpha-D-glucosamine biosynthesis; N-acetyl-alpha-D-glucosamine 1-phosphate from alpha-D-glucosamine 6-phosphate (route II): step 2/2.</text>
</comment>
<comment type="pathway">
    <text evidence="1">Nucleotide-sugar biosynthesis; UDP-N-acetyl-alpha-D-glucosamine biosynthesis; UDP-N-acetyl-alpha-D-glucosamine from N-acetyl-alpha-D-glucosamine 1-phosphate: step 1/1.</text>
</comment>
<comment type="pathway">
    <text evidence="1">Bacterial outer membrane biogenesis; LPS lipid A biosynthesis.</text>
</comment>
<comment type="subunit">
    <text evidence="1">Homotrimer.</text>
</comment>
<comment type="subcellular location">
    <subcellularLocation>
        <location evidence="1">Cytoplasm</location>
    </subcellularLocation>
</comment>
<comment type="similarity">
    <text evidence="1">In the N-terminal section; belongs to the N-acetylglucosamine-1-phosphate uridyltransferase family.</text>
</comment>
<comment type="similarity">
    <text evidence="1">In the C-terminal section; belongs to the transferase hexapeptide repeat family.</text>
</comment>
<keyword id="KW-0012">Acyltransferase</keyword>
<keyword id="KW-0133">Cell shape</keyword>
<keyword id="KW-0961">Cell wall biogenesis/degradation</keyword>
<keyword id="KW-0963">Cytoplasm</keyword>
<keyword id="KW-0460">Magnesium</keyword>
<keyword id="KW-0479">Metal-binding</keyword>
<keyword id="KW-0511">Multifunctional enzyme</keyword>
<keyword id="KW-0548">Nucleotidyltransferase</keyword>
<keyword id="KW-0573">Peptidoglycan synthesis</keyword>
<keyword id="KW-0677">Repeat</keyword>
<keyword id="KW-0808">Transferase</keyword>
<name>GLMU_STAAS</name>
<feature type="chain" id="PRO_0000068712" description="Bifunctional protein GlmU">
    <location>
        <begin position="1"/>
        <end position="450"/>
    </location>
</feature>
<feature type="region of interest" description="Pyrophosphorylase" evidence="1">
    <location>
        <begin position="1"/>
        <end position="229"/>
    </location>
</feature>
<feature type="region of interest" description="Linker" evidence="1">
    <location>
        <begin position="230"/>
        <end position="250"/>
    </location>
</feature>
<feature type="region of interest" description="N-acetyltransferase" evidence="1">
    <location>
        <begin position="251"/>
        <end position="450"/>
    </location>
</feature>
<feature type="active site" description="Proton acceptor" evidence="1">
    <location>
        <position position="362"/>
    </location>
</feature>
<feature type="binding site" evidence="1">
    <location>
        <begin position="8"/>
        <end position="11"/>
    </location>
    <ligand>
        <name>UDP-N-acetyl-alpha-D-glucosamine</name>
        <dbReference type="ChEBI" id="CHEBI:57705"/>
    </ligand>
</feature>
<feature type="binding site" evidence="1">
    <location>
        <position position="22"/>
    </location>
    <ligand>
        <name>UDP-N-acetyl-alpha-D-glucosamine</name>
        <dbReference type="ChEBI" id="CHEBI:57705"/>
    </ligand>
</feature>
<feature type="binding site" evidence="1">
    <location>
        <position position="72"/>
    </location>
    <ligand>
        <name>UDP-N-acetyl-alpha-D-glucosamine</name>
        <dbReference type="ChEBI" id="CHEBI:57705"/>
    </ligand>
</feature>
<feature type="binding site" evidence="1">
    <location>
        <begin position="77"/>
        <end position="78"/>
    </location>
    <ligand>
        <name>UDP-N-acetyl-alpha-D-glucosamine</name>
        <dbReference type="ChEBI" id="CHEBI:57705"/>
    </ligand>
</feature>
<feature type="binding site" evidence="1">
    <location>
        <position position="102"/>
    </location>
    <ligand>
        <name>Mg(2+)</name>
        <dbReference type="ChEBI" id="CHEBI:18420"/>
    </ligand>
</feature>
<feature type="binding site" evidence="1">
    <location>
        <position position="139"/>
    </location>
    <ligand>
        <name>UDP-N-acetyl-alpha-D-glucosamine</name>
        <dbReference type="ChEBI" id="CHEBI:57705"/>
    </ligand>
</feature>
<feature type="binding site" evidence="1">
    <location>
        <position position="154"/>
    </location>
    <ligand>
        <name>UDP-N-acetyl-alpha-D-glucosamine</name>
        <dbReference type="ChEBI" id="CHEBI:57705"/>
    </ligand>
</feature>
<feature type="binding site" evidence="1">
    <location>
        <position position="227"/>
    </location>
    <ligand>
        <name>Mg(2+)</name>
        <dbReference type="ChEBI" id="CHEBI:18420"/>
    </ligand>
</feature>
<feature type="binding site" evidence="1">
    <location>
        <position position="227"/>
    </location>
    <ligand>
        <name>UDP-N-acetyl-alpha-D-glucosamine</name>
        <dbReference type="ChEBI" id="CHEBI:57705"/>
    </ligand>
</feature>
<feature type="binding site" evidence="1">
    <location>
        <position position="332"/>
    </location>
    <ligand>
        <name>UDP-N-acetyl-alpha-D-glucosamine</name>
        <dbReference type="ChEBI" id="CHEBI:57705"/>
    </ligand>
</feature>
<feature type="binding site" evidence="1">
    <location>
        <position position="350"/>
    </location>
    <ligand>
        <name>UDP-N-acetyl-alpha-D-glucosamine</name>
        <dbReference type="ChEBI" id="CHEBI:57705"/>
    </ligand>
</feature>
<feature type="binding site" evidence="1">
    <location>
        <position position="365"/>
    </location>
    <ligand>
        <name>UDP-N-acetyl-alpha-D-glucosamine</name>
        <dbReference type="ChEBI" id="CHEBI:57705"/>
    </ligand>
</feature>
<feature type="binding site" evidence="1">
    <location>
        <position position="376"/>
    </location>
    <ligand>
        <name>UDP-N-acetyl-alpha-D-glucosamine</name>
        <dbReference type="ChEBI" id="CHEBI:57705"/>
    </ligand>
</feature>
<feature type="binding site" evidence="1">
    <location>
        <begin position="385"/>
        <end position="386"/>
    </location>
    <ligand>
        <name>acetyl-CoA</name>
        <dbReference type="ChEBI" id="CHEBI:57288"/>
    </ligand>
</feature>
<feature type="binding site" evidence="1">
    <location>
        <position position="422"/>
    </location>
    <ligand>
        <name>acetyl-CoA</name>
        <dbReference type="ChEBI" id="CHEBI:57288"/>
    </ligand>
</feature>
<feature type="binding site" evidence="1">
    <location>
        <position position="439"/>
    </location>
    <ligand>
        <name>acetyl-CoA</name>
        <dbReference type="ChEBI" id="CHEBI:57288"/>
    </ligand>
</feature>
<gene>
    <name evidence="1" type="primary">glmU</name>
    <name type="synonym">gcaD</name>
    <name type="ordered locus">SAS0456</name>
</gene>
<sequence>MRRHAIILAAGKGTRMKSKKYKVLHEVAGKPMVEHVLESVKGSGVDQVVTIVGHGAESVKGHLGERSLYSFQEEQLGTAHAVQMAKSHLEDKEGTTIVVCGDTPLITKETLETLIAHHEDANAQATVLSASIQQPYGYGRIVRNASGRLERIVEEKDATQAEKDINEISSGIFAFNNKTLFEKLTQVKNDNAQGEYYLPDVLSLILNDGGIVEVYRTNDVEEIMGVNDRVMLSQAEKAMQRRTNHYHMLNGVTIIDPDSTYIGPDVTIGSDTVIEPGVRINGRTEIGEDVVIGQYSEINNSTIENGACIQQSVVNDASVGANTKVGPFAQLRPGAQLGADVKVGNFVEIKKADLKDGAKVSHLSYIGDAVIGERTNIGCGTITVNYDGENKFKTIVGKDSFVGCNVNLVAPVTIGDDVLVAAGSTITDDVPNDSLAVARARQTTKEGYRK</sequence>
<protein>
    <recommendedName>
        <fullName evidence="1">Bifunctional protein GlmU</fullName>
    </recommendedName>
    <domain>
        <recommendedName>
            <fullName evidence="1">UDP-N-acetylglucosamine pyrophosphorylase</fullName>
            <ecNumber evidence="1">2.7.7.23</ecNumber>
        </recommendedName>
        <alternativeName>
            <fullName evidence="1">N-acetylglucosamine-1-phosphate uridyltransferase</fullName>
        </alternativeName>
    </domain>
    <domain>
        <recommendedName>
            <fullName evidence="1">Glucosamine-1-phosphate N-acetyltransferase</fullName>
            <ecNumber evidence="1">2.3.1.157</ecNumber>
        </recommendedName>
    </domain>
</protein>
<dbReference type="EC" id="2.7.7.23" evidence="1"/>
<dbReference type="EC" id="2.3.1.157" evidence="1"/>
<dbReference type="EMBL" id="BX571857">
    <property type="protein sequence ID" value="CAG42231.1"/>
    <property type="molecule type" value="Genomic_DNA"/>
</dbReference>
<dbReference type="RefSeq" id="WP_001252529.1">
    <property type="nucleotide sequence ID" value="NC_002953.3"/>
</dbReference>
<dbReference type="SMR" id="Q6GBY9"/>
<dbReference type="KEGG" id="sas:SAS0456"/>
<dbReference type="HOGENOM" id="CLU_029499_15_2_9"/>
<dbReference type="UniPathway" id="UPA00113">
    <property type="reaction ID" value="UER00532"/>
</dbReference>
<dbReference type="UniPathway" id="UPA00113">
    <property type="reaction ID" value="UER00533"/>
</dbReference>
<dbReference type="UniPathway" id="UPA00973"/>
<dbReference type="GO" id="GO:0005737">
    <property type="term" value="C:cytoplasm"/>
    <property type="evidence" value="ECO:0007669"/>
    <property type="project" value="UniProtKB-SubCell"/>
</dbReference>
<dbReference type="GO" id="GO:0016020">
    <property type="term" value="C:membrane"/>
    <property type="evidence" value="ECO:0007669"/>
    <property type="project" value="GOC"/>
</dbReference>
<dbReference type="GO" id="GO:0019134">
    <property type="term" value="F:glucosamine-1-phosphate N-acetyltransferase activity"/>
    <property type="evidence" value="ECO:0007669"/>
    <property type="project" value="UniProtKB-UniRule"/>
</dbReference>
<dbReference type="GO" id="GO:0000287">
    <property type="term" value="F:magnesium ion binding"/>
    <property type="evidence" value="ECO:0007669"/>
    <property type="project" value="UniProtKB-UniRule"/>
</dbReference>
<dbReference type="GO" id="GO:0003977">
    <property type="term" value="F:UDP-N-acetylglucosamine diphosphorylase activity"/>
    <property type="evidence" value="ECO:0007669"/>
    <property type="project" value="UniProtKB-UniRule"/>
</dbReference>
<dbReference type="GO" id="GO:0000902">
    <property type="term" value="P:cell morphogenesis"/>
    <property type="evidence" value="ECO:0007669"/>
    <property type="project" value="UniProtKB-UniRule"/>
</dbReference>
<dbReference type="GO" id="GO:0071555">
    <property type="term" value="P:cell wall organization"/>
    <property type="evidence" value="ECO:0007669"/>
    <property type="project" value="UniProtKB-KW"/>
</dbReference>
<dbReference type="GO" id="GO:0009245">
    <property type="term" value="P:lipid A biosynthetic process"/>
    <property type="evidence" value="ECO:0007669"/>
    <property type="project" value="UniProtKB-UniRule"/>
</dbReference>
<dbReference type="GO" id="GO:0009252">
    <property type="term" value="P:peptidoglycan biosynthetic process"/>
    <property type="evidence" value="ECO:0007669"/>
    <property type="project" value="UniProtKB-UniRule"/>
</dbReference>
<dbReference type="GO" id="GO:0008360">
    <property type="term" value="P:regulation of cell shape"/>
    <property type="evidence" value="ECO:0007669"/>
    <property type="project" value="UniProtKB-KW"/>
</dbReference>
<dbReference type="GO" id="GO:0006048">
    <property type="term" value="P:UDP-N-acetylglucosamine biosynthetic process"/>
    <property type="evidence" value="ECO:0007669"/>
    <property type="project" value="UniProtKB-UniPathway"/>
</dbReference>
<dbReference type="CDD" id="cd02540">
    <property type="entry name" value="GT2_GlmU_N_bac"/>
    <property type="match status" value="1"/>
</dbReference>
<dbReference type="CDD" id="cd03353">
    <property type="entry name" value="LbH_GlmU_C"/>
    <property type="match status" value="1"/>
</dbReference>
<dbReference type="Gene3D" id="2.160.10.10">
    <property type="entry name" value="Hexapeptide repeat proteins"/>
    <property type="match status" value="1"/>
</dbReference>
<dbReference type="Gene3D" id="3.90.550.10">
    <property type="entry name" value="Spore Coat Polysaccharide Biosynthesis Protein SpsA, Chain A"/>
    <property type="match status" value="1"/>
</dbReference>
<dbReference type="HAMAP" id="MF_01631">
    <property type="entry name" value="GlmU"/>
    <property type="match status" value="1"/>
</dbReference>
<dbReference type="InterPro" id="IPR005882">
    <property type="entry name" value="Bifunctional_GlmU"/>
</dbReference>
<dbReference type="InterPro" id="IPR050065">
    <property type="entry name" value="GlmU-like"/>
</dbReference>
<dbReference type="InterPro" id="IPR038009">
    <property type="entry name" value="GlmU_C_LbH"/>
</dbReference>
<dbReference type="InterPro" id="IPR001451">
    <property type="entry name" value="Hexapep"/>
</dbReference>
<dbReference type="InterPro" id="IPR018357">
    <property type="entry name" value="Hexapep_transf_CS"/>
</dbReference>
<dbReference type="InterPro" id="IPR005835">
    <property type="entry name" value="NTP_transferase_dom"/>
</dbReference>
<dbReference type="InterPro" id="IPR029044">
    <property type="entry name" value="Nucleotide-diphossugar_trans"/>
</dbReference>
<dbReference type="InterPro" id="IPR011004">
    <property type="entry name" value="Trimer_LpxA-like_sf"/>
</dbReference>
<dbReference type="NCBIfam" id="TIGR01173">
    <property type="entry name" value="glmU"/>
    <property type="match status" value="1"/>
</dbReference>
<dbReference type="NCBIfam" id="NF010934">
    <property type="entry name" value="PRK14354.1"/>
    <property type="match status" value="1"/>
</dbReference>
<dbReference type="PANTHER" id="PTHR43584:SF3">
    <property type="entry name" value="BIFUNCTIONAL PROTEIN GLMU"/>
    <property type="match status" value="1"/>
</dbReference>
<dbReference type="PANTHER" id="PTHR43584">
    <property type="entry name" value="NUCLEOTIDYL TRANSFERASE"/>
    <property type="match status" value="1"/>
</dbReference>
<dbReference type="Pfam" id="PF00132">
    <property type="entry name" value="Hexapep"/>
    <property type="match status" value="2"/>
</dbReference>
<dbReference type="Pfam" id="PF00483">
    <property type="entry name" value="NTP_transferase"/>
    <property type="match status" value="1"/>
</dbReference>
<dbReference type="SUPFAM" id="SSF53448">
    <property type="entry name" value="Nucleotide-diphospho-sugar transferases"/>
    <property type="match status" value="1"/>
</dbReference>
<dbReference type="SUPFAM" id="SSF51161">
    <property type="entry name" value="Trimeric LpxA-like enzymes"/>
    <property type="match status" value="1"/>
</dbReference>
<dbReference type="PROSITE" id="PS00101">
    <property type="entry name" value="HEXAPEP_TRANSFERASES"/>
    <property type="match status" value="1"/>
</dbReference>
<organism>
    <name type="scientific">Staphylococcus aureus (strain MSSA476)</name>
    <dbReference type="NCBI Taxonomy" id="282459"/>
    <lineage>
        <taxon>Bacteria</taxon>
        <taxon>Bacillati</taxon>
        <taxon>Bacillota</taxon>
        <taxon>Bacilli</taxon>
        <taxon>Bacillales</taxon>
        <taxon>Staphylococcaceae</taxon>
        <taxon>Staphylococcus</taxon>
    </lineage>
</organism>
<accession>Q6GBY9</accession>
<reference key="1">
    <citation type="journal article" date="2004" name="Proc. Natl. Acad. Sci. U.S.A.">
        <title>Complete genomes of two clinical Staphylococcus aureus strains: evidence for the rapid evolution of virulence and drug resistance.</title>
        <authorList>
            <person name="Holden M.T.G."/>
            <person name="Feil E.J."/>
            <person name="Lindsay J.A."/>
            <person name="Peacock S.J."/>
            <person name="Day N.P.J."/>
            <person name="Enright M.C."/>
            <person name="Foster T.J."/>
            <person name="Moore C.E."/>
            <person name="Hurst L."/>
            <person name="Atkin R."/>
            <person name="Barron A."/>
            <person name="Bason N."/>
            <person name="Bentley S.D."/>
            <person name="Chillingworth C."/>
            <person name="Chillingworth T."/>
            <person name="Churcher C."/>
            <person name="Clark L."/>
            <person name="Corton C."/>
            <person name="Cronin A."/>
            <person name="Doggett J."/>
            <person name="Dowd L."/>
            <person name="Feltwell T."/>
            <person name="Hance Z."/>
            <person name="Harris B."/>
            <person name="Hauser H."/>
            <person name="Holroyd S."/>
            <person name="Jagels K."/>
            <person name="James K.D."/>
            <person name="Lennard N."/>
            <person name="Line A."/>
            <person name="Mayes R."/>
            <person name="Moule S."/>
            <person name="Mungall K."/>
            <person name="Ormond D."/>
            <person name="Quail M.A."/>
            <person name="Rabbinowitsch E."/>
            <person name="Rutherford K.M."/>
            <person name="Sanders M."/>
            <person name="Sharp S."/>
            <person name="Simmonds M."/>
            <person name="Stevens K."/>
            <person name="Whitehead S."/>
            <person name="Barrell B.G."/>
            <person name="Spratt B.G."/>
            <person name="Parkhill J."/>
        </authorList>
    </citation>
    <scope>NUCLEOTIDE SEQUENCE [LARGE SCALE GENOMIC DNA]</scope>
    <source>
        <strain>MSSA476</strain>
    </source>
</reference>